<name>UFD4_YEAST</name>
<evidence type="ECO:0000250" key="1"/>
<evidence type="ECO:0000255" key="2">
    <source>
        <dbReference type="PROSITE-ProRule" id="PRU00104"/>
    </source>
</evidence>
<evidence type="ECO:0000256" key="3">
    <source>
        <dbReference type="SAM" id="MobiDB-lite"/>
    </source>
</evidence>
<evidence type="ECO:0000269" key="4">
    <source>
    </source>
</evidence>
<evidence type="ECO:0000305" key="5"/>
<evidence type="ECO:0007744" key="6">
    <source>
    </source>
</evidence>
<evidence type="ECO:0007744" key="7">
    <source>
    </source>
</evidence>
<protein>
    <recommendedName>
        <fullName>Ubiquitin fusion degradation protein 4</fullName>
        <shortName>UB fusion protein 4</shortName>
        <ecNumber>2.3.2.-</ecNumber>
    </recommendedName>
    <alternativeName>
        <fullName>HECT-type E3 ubiquitin transferase UFD4</fullName>
        <ecNumber>2.3.2.26</ecNumber>
    </alternativeName>
</protein>
<accession>P33202</accession>
<accession>D6VXS6</accession>
<reference key="1">
    <citation type="journal article" date="1992" name="Yeast">
        <title>The sequence of a 9.3 kb segment located on the left arm of the yeast chromosome XI reveals five open reading frames including the CCE1 gene and putative products related to MYO2 and to the ribosomal protein L10.</title>
        <authorList>
            <person name="Pascolo S."/>
            <person name="Ghazvini M."/>
            <person name="Boyer J."/>
            <person name="Colleaux L."/>
            <person name="Thierry A."/>
            <person name="Dujon B."/>
        </authorList>
    </citation>
    <scope>NUCLEOTIDE SEQUENCE [GENOMIC DNA]</scope>
</reference>
<reference key="2">
    <citation type="journal article" date="1994" name="Nature">
        <title>Complete DNA sequence of yeast chromosome XI.</title>
        <authorList>
            <person name="Dujon B."/>
            <person name="Alexandraki D."/>
            <person name="Andre B."/>
            <person name="Ansorge W."/>
            <person name="Baladron V."/>
            <person name="Ballesta J.P.G."/>
            <person name="Banrevi A."/>
            <person name="Bolle P.-A."/>
            <person name="Bolotin-Fukuhara M."/>
            <person name="Bossier P."/>
            <person name="Bou G."/>
            <person name="Boyer J."/>
            <person name="Buitrago M.J."/>
            <person name="Cheret G."/>
            <person name="Colleaux L."/>
            <person name="Daignan-Fornier B."/>
            <person name="del Rey F."/>
            <person name="Dion C."/>
            <person name="Domdey H."/>
            <person name="Duesterhoeft A."/>
            <person name="Duesterhus S."/>
            <person name="Entian K.-D."/>
            <person name="Erfle H."/>
            <person name="Esteban P.F."/>
            <person name="Feldmann H."/>
            <person name="Fernandes L."/>
            <person name="Fobo G.M."/>
            <person name="Fritz C."/>
            <person name="Fukuhara H."/>
            <person name="Gabel C."/>
            <person name="Gaillon L."/>
            <person name="Garcia-Cantalejo J.M."/>
            <person name="Garcia-Ramirez J.J."/>
            <person name="Gent M.E."/>
            <person name="Ghazvini M."/>
            <person name="Goffeau A."/>
            <person name="Gonzalez A."/>
            <person name="Grothues D."/>
            <person name="Guerreiro P."/>
            <person name="Hegemann J.H."/>
            <person name="Hewitt N."/>
            <person name="Hilger F."/>
            <person name="Hollenberg C.P."/>
            <person name="Horaitis O."/>
            <person name="Indge K.J."/>
            <person name="Jacquier A."/>
            <person name="James C.M."/>
            <person name="Jauniaux J.-C."/>
            <person name="Jimenez A."/>
            <person name="Keuchel H."/>
            <person name="Kirchrath L."/>
            <person name="Kleine K."/>
            <person name="Koetter P."/>
            <person name="Legrain P."/>
            <person name="Liebl S."/>
            <person name="Louis E.J."/>
            <person name="Maia e Silva A."/>
            <person name="Marck C."/>
            <person name="Monnier A.-L."/>
            <person name="Moestl D."/>
            <person name="Mueller S."/>
            <person name="Obermaier B."/>
            <person name="Oliver S.G."/>
            <person name="Pallier C."/>
            <person name="Pascolo S."/>
            <person name="Pfeiffer F."/>
            <person name="Philippsen P."/>
            <person name="Planta R.J."/>
            <person name="Pohl F.M."/>
            <person name="Pohl T.M."/>
            <person name="Poehlmann R."/>
            <person name="Portetelle D."/>
            <person name="Purnelle B."/>
            <person name="Puzos V."/>
            <person name="Ramezani Rad M."/>
            <person name="Rasmussen S.W."/>
            <person name="Remacha M.A."/>
            <person name="Revuelta J.L."/>
            <person name="Richard G.-F."/>
            <person name="Rieger M."/>
            <person name="Rodrigues-Pousada C."/>
            <person name="Rose M."/>
            <person name="Rupp T."/>
            <person name="Santos M.A."/>
            <person name="Schwager C."/>
            <person name="Sensen C."/>
            <person name="Skala J."/>
            <person name="Soares H."/>
            <person name="Sor F."/>
            <person name="Stegemann J."/>
            <person name="Tettelin H."/>
            <person name="Thierry A."/>
            <person name="Tzermia M."/>
            <person name="Urrestarazu L.A."/>
            <person name="van Dyck L."/>
            <person name="van Vliet-Reedijk J.C."/>
            <person name="Valens M."/>
            <person name="Vandenbol M."/>
            <person name="Vilela C."/>
            <person name="Vissers S."/>
            <person name="von Wettstein D."/>
            <person name="Voss H."/>
            <person name="Wiemann S."/>
            <person name="Xu G."/>
            <person name="Zimmermann J."/>
            <person name="Haasemann M."/>
            <person name="Becker I."/>
            <person name="Mewes H.-W."/>
        </authorList>
    </citation>
    <scope>NUCLEOTIDE SEQUENCE [LARGE SCALE GENOMIC DNA]</scope>
    <source>
        <strain>ATCC 204508 / S288c</strain>
    </source>
</reference>
<reference key="3">
    <citation type="journal article" date="2014" name="G3 (Bethesda)">
        <title>The reference genome sequence of Saccharomyces cerevisiae: Then and now.</title>
        <authorList>
            <person name="Engel S.R."/>
            <person name="Dietrich F.S."/>
            <person name="Fisk D.G."/>
            <person name="Binkley G."/>
            <person name="Balakrishnan R."/>
            <person name="Costanzo M.C."/>
            <person name="Dwight S.S."/>
            <person name="Hitz B.C."/>
            <person name="Karra K."/>
            <person name="Nash R.S."/>
            <person name="Weng S."/>
            <person name="Wong E.D."/>
            <person name="Lloyd P."/>
            <person name="Skrzypek M.S."/>
            <person name="Miyasato S.R."/>
            <person name="Simison M."/>
            <person name="Cherry J.M."/>
        </authorList>
    </citation>
    <scope>GENOME REANNOTATION</scope>
    <source>
        <strain>ATCC 204508 / S288c</strain>
    </source>
</reference>
<reference key="4">
    <citation type="journal article" date="1995" name="J. Biol. Chem.">
        <title>A proteolytic pathway that recognizes ubiquitin as a degradation signal.</title>
        <authorList>
            <person name="Johnson E.S."/>
            <person name="Ma P.C.M."/>
            <person name="Ota I.M."/>
            <person name="Varshavsky A."/>
        </authorList>
    </citation>
    <scope>CHARACTERIZATION</scope>
    <source>
        <strain>ATCC 204508 / S288c</strain>
    </source>
</reference>
<reference key="5">
    <citation type="journal article" date="2003" name="Nature">
        <title>Global analysis of protein expression in yeast.</title>
        <authorList>
            <person name="Ghaemmaghami S."/>
            <person name="Huh W.-K."/>
            <person name="Bower K."/>
            <person name="Howson R.W."/>
            <person name="Belle A."/>
            <person name="Dephoure N."/>
            <person name="O'Shea E.K."/>
            <person name="Weissman J.S."/>
        </authorList>
    </citation>
    <scope>LEVEL OF PROTEIN EXPRESSION [LARGE SCALE ANALYSIS]</scope>
</reference>
<reference key="6">
    <citation type="journal article" date="2007" name="J. Proteome Res.">
        <title>Large-scale phosphorylation analysis of alpha-factor-arrested Saccharomyces cerevisiae.</title>
        <authorList>
            <person name="Li X."/>
            <person name="Gerber S.A."/>
            <person name="Rudner A.D."/>
            <person name="Beausoleil S.A."/>
            <person name="Haas W."/>
            <person name="Villen J."/>
            <person name="Elias J.E."/>
            <person name="Gygi S.P."/>
        </authorList>
    </citation>
    <scope>IDENTIFICATION BY MASS SPECTROMETRY [LARGE SCALE ANALYSIS]</scope>
    <source>
        <strain>ADR376</strain>
    </source>
</reference>
<reference key="7">
    <citation type="journal article" date="2008" name="Mol. Cell. Proteomics">
        <title>A multidimensional chromatography technology for in-depth phosphoproteome analysis.</title>
        <authorList>
            <person name="Albuquerque C.P."/>
            <person name="Smolka M.B."/>
            <person name="Payne S.H."/>
            <person name="Bafna V."/>
            <person name="Eng J."/>
            <person name="Zhou H."/>
        </authorList>
    </citation>
    <scope>IDENTIFICATION BY MASS SPECTROMETRY [LARGE SCALE ANALYSIS]</scope>
</reference>
<reference key="8">
    <citation type="journal article" date="2009" name="Science">
        <title>Global analysis of Cdk1 substrate phosphorylation sites provides insights into evolution.</title>
        <authorList>
            <person name="Holt L.J."/>
            <person name="Tuch B.B."/>
            <person name="Villen J."/>
            <person name="Johnson A.D."/>
            <person name="Gygi S.P."/>
            <person name="Morgan D.O."/>
        </authorList>
    </citation>
    <scope>PHOSPHORYLATION [LARGE SCALE ANALYSIS] AT THR-87</scope>
    <scope>IDENTIFICATION BY MASS SPECTROMETRY [LARGE SCALE ANALYSIS]</scope>
</reference>
<reference key="9">
    <citation type="journal article" date="2012" name="Proteomics">
        <title>Sites of ubiquitin attachment in Saccharomyces cerevisiae.</title>
        <authorList>
            <person name="Starita L.M."/>
            <person name="Lo R.S."/>
            <person name="Eng J.K."/>
            <person name="von Haller P.D."/>
            <person name="Fields S."/>
        </authorList>
    </citation>
    <scope>UBIQUITINATION [LARGE SCALE ANALYSIS] AT LYS-349</scope>
    <scope>IDENTIFICATION BY MASS SPECTROMETRY [LARGE SCALE ANALYSIS]</scope>
</reference>
<gene>
    <name type="primary">UFD4</name>
    <name type="ordered locus">YKL010C</name>
    <name type="ORF">YKL162</name>
</gene>
<comment type="function">
    <text evidence="1">E3 ubiquitin-protein ligase which accepts ubiquitin from an E2 ubiquitin-conjugating enzyme in the form of a thioester and then directly transfers the ubiquitin to targeted substrates.</text>
</comment>
<comment type="catalytic activity">
    <reaction>
        <text>S-ubiquitinyl-[E2 ubiquitin-conjugating enzyme]-L-cysteine + [acceptor protein]-L-lysine = [E2 ubiquitin-conjugating enzyme]-L-cysteine + N(6)-ubiquitinyl-[acceptor protein]-L-lysine.</text>
        <dbReference type="EC" id="2.3.2.26"/>
    </reaction>
</comment>
<comment type="interaction">
    <interactant intactId="EBI-20010">
        <id>P33202</id>
    </interactant>
    <interactant intactId="EBI-10873">
        <id>P26188</id>
        <label>MGT1</label>
    </interactant>
    <organismsDiffer>false</organismsDiffer>
    <experiments>2</experiments>
</comment>
<comment type="interaction">
    <interactant intactId="EBI-20010">
        <id>P33202</id>
    </interactant>
    <interactant intactId="EBI-13914">
        <id>Q01939</id>
        <label>RPT6</label>
    </interactant>
    <organismsDiffer>false</organismsDiffer>
    <experiments>3</experiments>
</comment>
<comment type="interaction">
    <interactant intactId="EBI-20010">
        <id>P33202</id>
    </interactant>
    <interactant intactId="EBI-20003">
        <id>P54860</id>
        <label>UFD2</label>
    </interactant>
    <organismsDiffer>false</organismsDiffer>
    <experiments>2</experiments>
</comment>
<comment type="miscellaneous">
    <text>A cysteine residue is required for ubiquitin-thioester formation.</text>
</comment>
<comment type="miscellaneous">
    <text evidence="4">Present with 7380 molecules/cell in log phase SD medium.</text>
</comment>
<comment type="similarity">
    <text evidence="5">Belongs to the UPL family. K-HECT subfamily.</text>
</comment>
<feature type="chain" id="PRO_0000194998" description="Ubiquitin fusion degradation protein 4">
    <location>
        <begin position="1"/>
        <end position="1483"/>
    </location>
</feature>
<feature type="domain" description="HECT" evidence="2">
    <location>
        <begin position="1376"/>
        <end position="1483"/>
    </location>
</feature>
<feature type="region of interest" description="Disordered" evidence="3">
    <location>
        <begin position="1"/>
        <end position="117"/>
    </location>
</feature>
<feature type="region of interest" description="K-box">
    <location>
        <begin position="1007"/>
        <end position="1081"/>
    </location>
</feature>
<feature type="compositionally biased region" description="Basic and acidic residues" evidence="3">
    <location>
        <begin position="8"/>
        <end position="18"/>
    </location>
</feature>
<feature type="compositionally biased region" description="Acidic residues" evidence="3">
    <location>
        <begin position="61"/>
        <end position="70"/>
    </location>
</feature>
<feature type="active site" description="Glycyl thioester intermediate" evidence="2">
    <location>
        <position position="1450"/>
    </location>
</feature>
<feature type="modified residue" description="Phosphothreonine" evidence="6">
    <location>
        <position position="87"/>
    </location>
</feature>
<feature type="cross-link" description="Glycyl lysine isopeptide (Lys-Gly) (interchain with G-Cter in ubiquitin)" evidence="7">
    <location>
        <position position="349"/>
    </location>
</feature>
<dbReference type="EC" id="2.3.2.-"/>
<dbReference type="EC" id="2.3.2.26"/>
<dbReference type="EMBL" id="S53418">
    <property type="protein sequence ID" value="AAB24903.1"/>
    <property type="molecule type" value="Genomic_DNA"/>
</dbReference>
<dbReference type="EMBL" id="Z28010">
    <property type="protein sequence ID" value="CAA81845.1"/>
    <property type="molecule type" value="Genomic_DNA"/>
</dbReference>
<dbReference type="EMBL" id="BK006944">
    <property type="protein sequence ID" value="DAA09146.1"/>
    <property type="molecule type" value="Genomic_DNA"/>
</dbReference>
<dbReference type="PIR" id="S30015">
    <property type="entry name" value="S30015"/>
</dbReference>
<dbReference type="RefSeq" id="NP_012915.3">
    <property type="nucleotide sequence ID" value="NM_001179576.3"/>
</dbReference>
<dbReference type="PDB" id="8J1P">
    <property type="method" value="EM"/>
    <property type="resolution" value="3.31 A"/>
    <property type="chains" value="A=1-1483"/>
</dbReference>
<dbReference type="PDB" id="8J1R">
    <property type="method" value="EM"/>
    <property type="resolution" value="3.52 A"/>
    <property type="chains" value="A=1-1483"/>
</dbReference>
<dbReference type="PDBsum" id="8J1P"/>
<dbReference type="PDBsum" id="8J1R"/>
<dbReference type="EMDB" id="EMD-35929"/>
<dbReference type="EMDB" id="EMD-35931"/>
<dbReference type="SMR" id="P33202"/>
<dbReference type="BioGRID" id="34122">
    <property type="interactions" value="188"/>
</dbReference>
<dbReference type="DIP" id="DIP-4873N"/>
<dbReference type="FunCoup" id="P33202">
    <property type="interactions" value="1428"/>
</dbReference>
<dbReference type="IntAct" id="P33202">
    <property type="interactions" value="31"/>
</dbReference>
<dbReference type="MINT" id="P33202"/>
<dbReference type="STRING" id="4932.YKL010C"/>
<dbReference type="iPTMnet" id="P33202"/>
<dbReference type="PaxDb" id="4932-YKL010C"/>
<dbReference type="PeptideAtlas" id="P33202"/>
<dbReference type="EnsemblFungi" id="YKL010C_mRNA">
    <property type="protein sequence ID" value="YKL010C"/>
    <property type="gene ID" value="YKL010C"/>
</dbReference>
<dbReference type="GeneID" id="853859"/>
<dbReference type="KEGG" id="sce:YKL010C"/>
<dbReference type="AGR" id="SGD:S000001493"/>
<dbReference type="SGD" id="S000001493">
    <property type="gene designation" value="UFD4"/>
</dbReference>
<dbReference type="VEuPathDB" id="FungiDB:YKL010C"/>
<dbReference type="eggNOG" id="KOG0168">
    <property type="taxonomic scope" value="Eukaryota"/>
</dbReference>
<dbReference type="eggNOG" id="KOG0170">
    <property type="taxonomic scope" value="Eukaryota"/>
</dbReference>
<dbReference type="GeneTree" id="ENSGT00940000156517"/>
<dbReference type="HOGENOM" id="CLU_000366_1_1_1"/>
<dbReference type="InParanoid" id="P33202"/>
<dbReference type="OMA" id="FFTIHAQ"/>
<dbReference type="OrthoDB" id="423283at2759"/>
<dbReference type="BioCyc" id="YEAST:G3O-31819-MONOMER"/>
<dbReference type="Reactome" id="R-SCE-983168">
    <property type="pathway name" value="Antigen processing: Ubiquitination &amp; Proteasome degradation"/>
</dbReference>
<dbReference type="BioGRID-ORCS" id="853859">
    <property type="hits" value="1 hit in 10 CRISPR screens"/>
</dbReference>
<dbReference type="PRO" id="PR:P33202"/>
<dbReference type="Proteomes" id="UP000002311">
    <property type="component" value="Chromosome XI"/>
</dbReference>
<dbReference type="RNAct" id="P33202">
    <property type="molecule type" value="protein"/>
</dbReference>
<dbReference type="GO" id="GO:0005737">
    <property type="term" value="C:cytoplasm"/>
    <property type="evidence" value="ECO:0007005"/>
    <property type="project" value="SGD"/>
</dbReference>
<dbReference type="GO" id="GO:0005739">
    <property type="term" value="C:mitochondrion"/>
    <property type="evidence" value="ECO:0007005"/>
    <property type="project" value="SGD"/>
</dbReference>
<dbReference type="GO" id="GO:0016607">
    <property type="term" value="C:nuclear speck"/>
    <property type="evidence" value="ECO:0000318"/>
    <property type="project" value="GO_Central"/>
</dbReference>
<dbReference type="GO" id="GO:0005634">
    <property type="term" value="C:nucleus"/>
    <property type="evidence" value="ECO:0007005"/>
    <property type="project" value="SGD"/>
</dbReference>
<dbReference type="GO" id="GO:1904855">
    <property type="term" value="F:proteasome regulatory particle binding"/>
    <property type="evidence" value="ECO:0000353"/>
    <property type="project" value="SGD"/>
</dbReference>
<dbReference type="GO" id="GO:0061630">
    <property type="term" value="F:ubiquitin protein ligase activity"/>
    <property type="evidence" value="ECO:0000314"/>
    <property type="project" value="SGD"/>
</dbReference>
<dbReference type="GO" id="GO:0010994">
    <property type="term" value="P:free ubiquitin chain polymerization"/>
    <property type="evidence" value="ECO:0000315"/>
    <property type="project" value="SGD"/>
</dbReference>
<dbReference type="GO" id="GO:0043161">
    <property type="term" value="P:proteasome-mediated ubiquitin-dependent protein catabolic process"/>
    <property type="evidence" value="ECO:0000318"/>
    <property type="project" value="GO_Central"/>
</dbReference>
<dbReference type="GO" id="GO:0035519">
    <property type="term" value="P:protein K29-linked ubiquitination"/>
    <property type="evidence" value="ECO:0000314"/>
    <property type="project" value="SGD"/>
</dbReference>
<dbReference type="GO" id="GO:0000209">
    <property type="term" value="P:protein polyubiquitination"/>
    <property type="evidence" value="ECO:0000318"/>
    <property type="project" value="GO_Central"/>
</dbReference>
<dbReference type="GO" id="GO:0006511">
    <property type="term" value="P:ubiquitin-dependent protein catabolic process"/>
    <property type="evidence" value="ECO:0000315"/>
    <property type="project" value="SGD"/>
</dbReference>
<dbReference type="CDD" id="cd00078">
    <property type="entry name" value="HECTc"/>
    <property type="match status" value="1"/>
</dbReference>
<dbReference type="FunFam" id="3.30.2410.10:FF:000007">
    <property type="entry name" value="Putative E3 ubiquitin-protein ligase HECTD1"/>
    <property type="match status" value="1"/>
</dbReference>
<dbReference type="FunFam" id="1.25.10.10:FF:000734">
    <property type="entry name" value="Ubiquitin ligase e3"/>
    <property type="match status" value="1"/>
</dbReference>
<dbReference type="FunFam" id="3.90.1750.10:FF:000045">
    <property type="entry name" value="Ubiquitin ligase e3"/>
    <property type="match status" value="1"/>
</dbReference>
<dbReference type="Gene3D" id="3.30.2160.10">
    <property type="entry name" value="Hect, E3 ligase catalytic domain"/>
    <property type="match status" value="1"/>
</dbReference>
<dbReference type="Gene3D" id="3.30.2410.10">
    <property type="entry name" value="Hect, E3 ligase catalytic domain"/>
    <property type="match status" value="1"/>
</dbReference>
<dbReference type="Gene3D" id="3.90.1750.10">
    <property type="entry name" value="Hect, E3 ligase catalytic domains"/>
    <property type="match status" value="1"/>
</dbReference>
<dbReference type="Gene3D" id="1.25.10.10">
    <property type="entry name" value="Leucine-rich Repeat Variant"/>
    <property type="match status" value="1"/>
</dbReference>
<dbReference type="InterPro" id="IPR011989">
    <property type="entry name" value="ARM-like"/>
</dbReference>
<dbReference type="InterPro" id="IPR016024">
    <property type="entry name" value="ARM-type_fold"/>
</dbReference>
<dbReference type="InterPro" id="IPR000569">
    <property type="entry name" value="HECT_dom"/>
</dbReference>
<dbReference type="InterPro" id="IPR035983">
    <property type="entry name" value="Hect_E3_ubiquitin_ligase"/>
</dbReference>
<dbReference type="InterPro" id="IPR045322">
    <property type="entry name" value="HECTD1/TRIP12-like"/>
</dbReference>
<dbReference type="PANTHER" id="PTHR45670:SF1">
    <property type="entry name" value="E3 UBIQUITIN-PROTEIN LIGASE HECTD1"/>
    <property type="match status" value="1"/>
</dbReference>
<dbReference type="PANTHER" id="PTHR45670">
    <property type="entry name" value="E3 UBIQUITIN-PROTEIN LIGASE TRIP12"/>
    <property type="match status" value="1"/>
</dbReference>
<dbReference type="Pfam" id="PF00632">
    <property type="entry name" value="HECT"/>
    <property type="match status" value="1"/>
</dbReference>
<dbReference type="SMART" id="SM00119">
    <property type="entry name" value="HECTc"/>
    <property type="match status" value="1"/>
</dbReference>
<dbReference type="SUPFAM" id="SSF48371">
    <property type="entry name" value="ARM repeat"/>
    <property type="match status" value="1"/>
</dbReference>
<dbReference type="SUPFAM" id="SSF56204">
    <property type="entry name" value="Hect, E3 ligase catalytic domain"/>
    <property type="match status" value="1"/>
</dbReference>
<dbReference type="PROSITE" id="PS50237">
    <property type="entry name" value="HECT"/>
    <property type="match status" value="1"/>
</dbReference>
<organism>
    <name type="scientific">Saccharomyces cerevisiae (strain ATCC 204508 / S288c)</name>
    <name type="common">Baker's yeast</name>
    <dbReference type="NCBI Taxonomy" id="559292"/>
    <lineage>
        <taxon>Eukaryota</taxon>
        <taxon>Fungi</taxon>
        <taxon>Dikarya</taxon>
        <taxon>Ascomycota</taxon>
        <taxon>Saccharomycotina</taxon>
        <taxon>Saccharomycetes</taxon>
        <taxon>Saccharomycetales</taxon>
        <taxon>Saccharomycetaceae</taxon>
        <taxon>Saccharomyces</taxon>
    </lineage>
</organism>
<proteinExistence type="evidence at protein level"/>
<keyword id="KW-0002">3D-structure</keyword>
<keyword id="KW-1017">Isopeptide bond</keyword>
<keyword id="KW-0597">Phosphoprotein</keyword>
<keyword id="KW-1185">Reference proteome</keyword>
<keyword id="KW-0808">Transferase</keyword>
<keyword id="KW-0832">Ubl conjugation</keyword>
<keyword id="KW-0833">Ubl conjugation pathway</keyword>
<sequence>MSENNSHNLDEHESHSENSDYMMDTQVEDDYDEDGHVQGEYSYYPDEDEDEHMLSSVGSFEADDGEDDDNDYHHEDDSGLLYGYHRTQNGSDEDRNEEEDGLERSHDNNEFGSNPLHLPDILETFAQRLEQRRQTSEGLGQHPVGRTLPEILSMIGGRMERSAESSARNERISKLIENTGNASEDPYIAMESLKELSENILMMNQMVVDRIIPMETLIGNIAAILSDKILREELELQMQACRCMYNLFEVCPESISIAVDEHVIPILQGKLVEISYIDLAEQVLETVEYISRVHGRDILKTGQLSIYVQFFDFLTIHAQRKAIAIVSNACSSIRTDDFKTIVEVLPTLKPIFSNATDQPILTRLVNAMYGICGALHGVDKFETLFSLDLIERIVQLVSIQDTPLENKLKCLDILTVLAMSSDVLSRELREKTDIVDMATRSFQHYSKSPNAGLHETLIYVPNSLLISISRFIVVLFPPEDERILSADKYTGNSDRGVISNQEKFDSLVQCLIPILVEIYTNAADFDVRRYVLIALLRVVSCINNSTAKAINDQLIKLIGSILAQKETASNANGTYSSEAGTLLVGGLSLLDLICKKFSELFFPSIKREGIFDLVKDLSVDFNNIDLKEDGNENISLSDEEGDLHSSIEECDEGDEEYDYEFTDMEIPDSVKPKKISIHIFRTLSLAYIKNKGVNLVNRVLSQMNVEQEAITEELHQIEGVVSILENPSTPDKTEEDWKGIWSVLKKCIFHEDFDVSGFEFTSTGLASSITKRITSSTVSHFILAKSFLEVFEDCIDRFLEILQSALTRLENFSIVDCGLHDGGGVSSLAKEIKIKLVYDGDASKDNIGTDLSSTIVSVHCIASFTSLNEFLRHRMVRMRFLNSLIPNLTSSSTEADREEEENCLDHMRKKNFDFFYDNEKVDMESTVFGVIFNTFVRRNRDLKTLWDDTHTIKFCKSLEGNNRESEAAEEANEGKKLRDFYKKREFAQVDTGSSADILTLLDFLHSCGVKSDSFINSKLSAKLARQLDEPLVVASGALPDWSLFLTRRFPFLFPFDTRMLFLQCTSFGYGRLIQLWKNKSKGSKDLRNDEALQQLGRITRRKLRISRKTIFATGLKILSKYGSSPDVLEIEYQEEAGTGLGPTLEFYSVVSKYFARKSLNMWRCNSYSYRSEMDVDTTDDYITTLLFPEPLNPFSNNEKVIELFGYLGTFVARSLLDNRILDFRFSKVFFELLHRMSTPNVTTVPSDVETCLLMIELVDPLLAKSLKYIVANKDDNMTLESLSLTFTVPGNDDIELIPGGCNKSLNSSNVEEYIHGVIDQILGKGIEKQLKAFIEGFSKVFSYERMLILFPDELVDIFGRVEEDWSMATLYTNLNAEHGYTMDSSIIHDFISIISAFGKHERRLFLQFLTGSPKLPIGGFKSLNPKFTVVLKHAEDGLTADEYLPSVMTCANYLKLPKYTSKDIMRSRLCQAIEEGAGAFLLS</sequence>